<dbReference type="EMBL" id="AL627238">
    <property type="status" value="NOT_ANNOTATED_CDS"/>
    <property type="molecule type" value="Genomic_DNA"/>
</dbReference>
<dbReference type="CCDS" id="CCDS38833.1"/>
<dbReference type="RefSeq" id="NP_001092773.1">
    <property type="nucleotide sequence ID" value="NM_001099303.2"/>
</dbReference>
<dbReference type="SMR" id="A2A9G7"/>
<dbReference type="STRING" id="10090.ENSMUSP00000060463"/>
<dbReference type="GlyGen" id="A2A9G7">
    <property type="glycosylation" value="1 site"/>
</dbReference>
<dbReference type="PaxDb" id="10090-ENSMUSP00000060463"/>
<dbReference type="Antibodypedia" id="52572">
    <property type="antibodies" value="14 antibodies from 11 providers"/>
</dbReference>
<dbReference type="Ensembl" id="ENSMUST00000053157.7">
    <property type="protein sequence ID" value="ENSMUSP00000060463.7"/>
    <property type="gene ID" value="ENSMUSG00000059816.6"/>
</dbReference>
<dbReference type="GeneID" id="545667"/>
<dbReference type="KEGG" id="mmu:545667"/>
<dbReference type="UCSC" id="uc008ubb.2">
    <property type="organism name" value="mouse"/>
</dbReference>
<dbReference type="AGR" id="MGI:3651644"/>
<dbReference type="CTD" id="348378"/>
<dbReference type="MGI" id="MGI:3651644">
    <property type="gene designation" value="Shisal2a"/>
</dbReference>
<dbReference type="VEuPathDB" id="HostDB:ENSMUSG00000059816"/>
<dbReference type="eggNOG" id="ENOG502S15N">
    <property type="taxonomic scope" value="Eukaryota"/>
</dbReference>
<dbReference type="GeneTree" id="ENSGT00940000161304"/>
<dbReference type="HOGENOM" id="CLU_107203_0_0_1"/>
<dbReference type="InParanoid" id="A2A9G7"/>
<dbReference type="OMA" id="CLLQHCF"/>
<dbReference type="OrthoDB" id="10062839at2759"/>
<dbReference type="PhylomeDB" id="A2A9G7"/>
<dbReference type="TreeFam" id="TF335848"/>
<dbReference type="BioGRID-ORCS" id="545667">
    <property type="hits" value="3 hits in 78 CRISPR screens"/>
</dbReference>
<dbReference type="ChiTaRS" id="Shisal2a">
    <property type="organism name" value="mouse"/>
</dbReference>
<dbReference type="PRO" id="PR:A2A9G7"/>
<dbReference type="Proteomes" id="UP000000589">
    <property type="component" value="Chromosome 4"/>
</dbReference>
<dbReference type="RNAct" id="A2A9G7">
    <property type="molecule type" value="protein"/>
</dbReference>
<dbReference type="Bgee" id="ENSMUSG00000059816">
    <property type="expression patterns" value="Expressed in blastoderm cell in morula and 32 other cell types or tissues"/>
</dbReference>
<dbReference type="GO" id="GO:0016020">
    <property type="term" value="C:membrane"/>
    <property type="evidence" value="ECO:0007669"/>
    <property type="project" value="UniProtKB-SubCell"/>
</dbReference>
<dbReference type="InterPro" id="IPR026910">
    <property type="entry name" value="Shisa"/>
</dbReference>
<dbReference type="InterPro" id="IPR053891">
    <property type="entry name" value="Shisa_N"/>
</dbReference>
<dbReference type="PANTHER" id="PTHR31395:SF3">
    <property type="entry name" value="PROTEIN SHISA-LIKE-2A"/>
    <property type="match status" value="1"/>
</dbReference>
<dbReference type="PANTHER" id="PTHR31395">
    <property type="entry name" value="SHISA"/>
    <property type="match status" value="1"/>
</dbReference>
<dbReference type="Pfam" id="PF13908">
    <property type="entry name" value="Shisa_N"/>
    <property type="match status" value="1"/>
</dbReference>
<name>SHL2A_MOUSE</name>
<organism>
    <name type="scientific">Mus musculus</name>
    <name type="common">Mouse</name>
    <dbReference type="NCBI Taxonomy" id="10090"/>
    <lineage>
        <taxon>Eukaryota</taxon>
        <taxon>Metazoa</taxon>
        <taxon>Chordata</taxon>
        <taxon>Craniata</taxon>
        <taxon>Vertebrata</taxon>
        <taxon>Euteleostomi</taxon>
        <taxon>Mammalia</taxon>
        <taxon>Eutheria</taxon>
        <taxon>Euarchontoglires</taxon>
        <taxon>Glires</taxon>
        <taxon>Rodentia</taxon>
        <taxon>Myomorpha</taxon>
        <taxon>Muroidea</taxon>
        <taxon>Muridae</taxon>
        <taxon>Murinae</taxon>
        <taxon>Mus</taxon>
        <taxon>Mus</taxon>
    </lineage>
</organism>
<reference key="1">
    <citation type="journal article" date="2009" name="PLoS Biol.">
        <title>Lineage-specific biology revealed by a finished genome assembly of the mouse.</title>
        <authorList>
            <person name="Church D.M."/>
            <person name="Goodstadt L."/>
            <person name="Hillier L.W."/>
            <person name="Zody M.C."/>
            <person name="Goldstein S."/>
            <person name="She X."/>
            <person name="Bult C.J."/>
            <person name="Agarwala R."/>
            <person name="Cherry J.L."/>
            <person name="DiCuccio M."/>
            <person name="Hlavina W."/>
            <person name="Kapustin Y."/>
            <person name="Meric P."/>
            <person name="Maglott D."/>
            <person name="Birtle Z."/>
            <person name="Marques A.C."/>
            <person name="Graves T."/>
            <person name="Zhou S."/>
            <person name="Teague B."/>
            <person name="Potamousis K."/>
            <person name="Churas C."/>
            <person name="Place M."/>
            <person name="Herschleb J."/>
            <person name="Runnheim R."/>
            <person name="Forrest D."/>
            <person name="Amos-Landgraf J."/>
            <person name="Schwartz D.C."/>
            <person name="Cheng Z."/>
            <person name="Lindblad-Toh K."/>
            <person name="Eichler E.E."/>
            <person name="Ponting C.P."/>
        </authorList>
    </citation>
    <scope>NUCLEOTIDE SEQUENCE [LARGE SCALE GENOMIC DNA]</scope>
    <source>
        <strain>C57BL/6J</strain>
    </source>
</reference>
<keyword id="KW-0472">Membrane</keyword>
<keyword id="KW-1185">Reference proteome</keyword>
<keyword id="KW-0812">Transmembrane</keyword>
<keyword id="KW-1133">Transmembrane helix</keyword>
<protein>
    <recommendedName>
        <fullName>Protein shisa-like-2A</fullName>
    </recommendedName>
</protein>
<proteinExistence type="inferred from homology"/>
<feature type="chain" id="PRO_0000317721" description="Protein shisa-like-2A">
    <location>
        <begin position="1"/>
        <end position="189"/>
    </location>
</feature>
<feature type="transmembrane region" description="Helical" evidence="1">
    <location>
        <begin position="48"/>
        <end position="68"/>
    </location>
</feature>
<feature type="transmembrane region" description="Helical" evidence="1">
    <location>
        <begin position="70"/>
        <end position="90"/>
    </location>
</feature>
<feature type="region of interest" description="Disordered" evidence="2">
    <location>
        <begin position="98"/>
        <end position="189"/>
    </location>
</feature>
<feature type="compositionally biased region" description="Polar residues" evidence="2">
    <location>
        <begin position="140"/>
        <end position="171"/>
    </location>
</feature>
<gene>
    <name type="primary">Shisal2a</name>
    <name type="synonym">Fam159a</name>
</gene>
<accession>A2A9G7</accession>
<sequence>MSGACSSYVSAEQEVVRGFSCPLPGGEAAAVFCCGFRDHKYCCDDPHSFFPYEHNYMWWLSIGALVGLSTAAVVLLAFLITACVLCYLFISSKPQTKLDPGLSLQTTGSKEMSPDHHGLNTAIPMEVPGVSSPRQSSSSNTHLESNKKQTVSPTCLPQNQFMATVTASNIPGSPDEISVPTPGPHGPVP</sequence>
<comment type="subcellular location">
    <subcellularLocation>
        <location evidence="3">Membrane</location>
        <topology evidence="3">Multi-pass membrane protein</topology>
    </subcellularLocation>
</comment>
<comment type="similarity">
    <text evidence="3">Belongs to the shisa family.</text>
</comment>
<evidence type="ECO:0000255" key="1"/>
<evidence type="ECO:0000256" key="2">
    <source>
        <dbReference type="SAM" id="MobiDB-lite"/>
    </source>
</evidence>
<evidence type="ECO:0000305" key="3"/>